<name>AND1A_MACFA</name>
<gene>
    <name type="primary">ANKDD1A</name>
    <name type="ORF">QccE-18247</name>
</gene>
<protein>
    <recommendedName>
        <fullName>Ankyrin repeat and death domain-containing protein 1A</fullName>
    </recommendedName>
</protein>
<evidence type="ECO:0000255" key="1">
    <source>
        <dbReference type="PROSITE-ProRule" id="PRU00064"/>
    </source>
</evidence>
<evidence type="ECO:0000305" key="2"/>
<proteinExistence type="evidence at transcript level"/>
<reference key="1">
    <citation type="journal article" date="2001" name="Gene">
        <title>Assignment of 118 novel cDNAs of cynomolgus monkey brain to human chromosomes.</title>
        <authorList>
            <person name="Osada N."/>
            <person name="Hida M."/>
            <person name="Kususda J."/>
            <person name="Tanuma R."/>
            <person name="Iseki K."/>
            <person name="Hirata M."/>
            <person name="Suto Y."/>
            <person name="Hirai M."/>
            <person name="Terao K."/>
            <person name="Suzuki Y."/>
            <person name="Sugano S."/>
            <person name="Hashimoto K."/>
        </authorList>
    </citation>
    <scope>NUCLEOTIDE SEQUENCE [LARGE SCALE MRNA]</scope>
    <source>
        <tissue>Brain cortex</tissue>
    </source>
</reference>
<reference key="2">
    <citation type="journal article" date="2001" name="Gene">
        <authorList>
            <person name="Osada N."/>
            <person name="Hida M."/>
            <person name="Kusuda J."/>
            <person name="Tanuma R."/>
            <person name="Iseki K."/>
            <person name="Hirata M."/>
            <person name="Suto Y."/>
            <person name="Hirai M."/>
            <person name="Terao K."/>
            <person name="Suzuki Y."/>
            <person name="Sugano S."/>
            <person name="Hashimoto K."/>
            <person name="Kususda J."/>
        </authorList>
    </citation>
    <scope>ERRATUM OF PUBMED:11574149</scope>
</reference>
<dbReference type="EMBL" id="AB051111">
    <property type="protein sequence ID" value="BAB18137.1"/>
    <property type="status" value="ALT_FRAME"/>
    <property type="molecule type" value="mRNA"/>
</dbReference>
<dbReference type="SMR" id="Q9GKW8"/>
<dbReference type="STRING" id="9541.ENSMFAP00000041711"/>
<dbReference type="eggNOG" id="KOG4177">
    <property type="taxonomic scope" value="Eukaryota"/>
</dbReference>
<dbReference type="Proteomes" id="UP000233100">
    <property type="component" value="Unplaced"/>
</dbReference>
<dbReference type="GO" id="GO:0007165">
    <property type="term" value="P:signal transduction"/>
    <property type="evidence" value="ECO:0007669"/>
    <property type="project" value="InterPro"/>
</dbReference>
<dbReference type="CDD" id="cd01670">
    <property type="entry name" value="Death"/>
    <property type="match status" value="1"/>
</dbReference>
<dbReference type="Gene3D" id="1.25.40.20">
    <property type="entry name" value="Ankyrin repeat-containing domain"/>
    <property type="match status" value="4"/>
</dbReference>
<dbReference type="Gene3D" id="1.10.533.10">
    <property type="entry name" value="Death Domain, Fas"/>
    <property type="match status" value="1"/>
</dbReference>
<dbReference type="InterPro" id="IPR052457">
    <property type="entry name" value="Ankyrin-DD_containing_protein"/>
</dbReference>
<dbReference type="InterPro" id="IPR002110">
    <property type="entry name" value="Ankyrin_rpt"/>
</dbReference>
<dbReference type="InterPro" id="IPR036770">
    <property type="entry name" value="Ankyrin_rpt-contain_sf"/>
</dbReference>
<dbReference type="InterPro" id="IPR011029">
    <property type="entry name" value="DEATH-like_dom_sf"/>
</dbReference>
<dbReference type="InterPro" id="IPR000488">
    <property type="entry name" value="Death_dom"/>
</dbReference>
<dbReference type="PANTHER" id="PTHR24125">
    <property type="entry name" value="ANKYRIN REPEAT AND DEATH DOMAIN-CONTAINING PROTEIN"/>
    <property type="match status" value="1"/>
</dbReference>
<dbReference type="PANTHER" id="PTHR24125:SF0">
    <property type="entry name" value="ANKYRIN REPEAT AND DEATH DOMAIN-CONTAINING PROTEIN 1A"/>
    <property type="match status" value="1"/>
</dbReference>
<dbReference type="Pfam" id="PF12796">
    <property type="entry name" value="Ank_2"/>
    <property type="match status" value="3"/>
</dbReference>
<dbReference type="Pfam" id="PF13637">
    <property type="entry name" value="Ank_4"/>
    <property type="match status" value="1"/>
</dbReference>
<dbReference type="PRINTS" id="PR01415">
    <property type="entry name" value="ANKYRIN"/>
</dbReference>
<dbReference type="SMART" id="SM00248">
    <property type="entry name" value="ANK"/>
    <property type="match status" value="10"/>
</dbReference>
<dbReference type="SUPFAM" id="SSF48403">
    <property type="entry name" value="Ankyrin repeat"/>
    <property type="match status" value="1"/>
</dbReference>
<dbReference type="SUPFAM" id="SSF47986">
    <property type="entry name" value="DEATH domain"/>
    <property type="match status" value="1"/>
</dbReference>
<dbReference type="PROSITE" id="PS50297">
    <property type="entry name" value="ANK_REP_REGION"/>
    <property type="match status" value="1"/>
</dbReference>
<dbReference type="PROSITE" id="PS50088">
    <property type="entry name" value="ANK_REPEAT"/>
    <property type="match status" value="8"/>
</dbReference>
<dbReference type="PROSITE" id="PS50017">
    <property type="entry name" value="DEATH_DOMAIN"/>
    <property type="match status" value="1"/>
</dbReference>
<organism>
    <name type="scientific">Macaca fascicularis</name>
    <name type="common">Crab-eating macaque</name>
    <name type="synonym">Cynomolgus monkey</name>
    <dbReference type="NCBI Taxonomy" id="9541"/>
    <lineage>
        <taxon>Eukaryota</taxon>
        <taxon>Metazoa</taxon>
        <taxon>Chordata</taxon>
        <taxon>Craniata</taxon>
        <taxon>Vertebrata</taxon>
        <taxon>Euteleostomi</taxon>
        <taxon>Mammalia</taxon>
        <taxon>Eutheria</taxon>
        <taxon>Euarchontoglires</taxon>
        <taxon>Primates</taxon>
        <taxon>Haplorrhini</taxon>
        <taxon>Catarrhini</taxon>
        <taxon>Cercopithecidae</taxon>
        <taxon>Cercopithecinae</taxon>
        <taxon>Macaca</taxon>
    </lineage>
</organism>
<comment type="sequence caution" evidence="2">
    <conflict type="frameshift">
        <sequence resource="EMBL-CDS" id="BAB18137"/>
    </conflict>
</comment>
<sequence>RGCGTAGCRRTWRGRPTAVGRVALHWAAGAGHEQAVRLLLEHEAAVDEEDAFGMNALLLSAWFGHLRILQILVNSGAKIHCKSKDGLTLLHCAAQKGHVPVLAFIMEDLEDVALDHVDKLGRTAFHRAAEHGQLDALDFLVGSGCDHSVKDKEGNTALHLAAGRGHMAVLQRLVDIGLDLEEQNAEGLTALHAAAGGTHPHCVRLLLRAGSTVNALTQKNLSCLHYAALSGSEDVSRVLIHAGGCTNVADHGASPLHLAVMHNFPALVQLLINSDSDLNAMDNRQQTPLHLAAEHAWQDIAEMLLIAGVDLNLRDKQGKTALAVAARSNHVSLVDMIIKADRFYKWEKDHLSCRDLSDPSGKSLSFKQDHRQETQQLRSVLWRLASRHLQPREWKKLAYSWDFTEAHVYAIEQQWTGTRSYQEHGHRMLLIWLHGVSTAGENPSKALFEGLVTIGRRDLAELAVASVGAYI</sequence>
<feature type="chain" id="PRO_0000287883" description="Ankyrin repeat and death domain-containing protein 1A">
    <location>
        <begin position="1" status="less than"/>
        <end position="471"/>
    </location>
</feature>
<feature type="repeat" description="ANK 1">
    <location>
        <begin position="19"/>
        <end position="48"/>
    </location>
</feature>
<feature type="repeat" description="ANK 2">
    <location>
        <begin position="52"/>
        <end position="81"/>
    </location>
</feature>
<feature type="repeat" description="ANK 3">
    <location>
        <begin position="85"/>
        <end position="114"/>
    </location>
</feature>
<feature type="repeat" description="ANK 4">
    <location>
        <begin position="120"/>
        <end position="149"/>
    </location>
</feature>
<feature type="repeat" description="ANK 5">
    <location>
        <begin position="153"/>
        <end position="182"/>
    </location>
</feature>
<feature type="repeat" description="ANK 6">
    <location>
        <begin position="186"/>
        <end position="215"/>
    </location>
</feature>
<feature type="repeat" description="ANK 7">
    <location>
        <begin position="219"/>
        <end position="248"/>
    </location>
</feature>
<feature type="repeat" description="ANK 8">
    <location>
        <begin position="251"/>
        <end position="280"/>
    </location>
</feature>
<feature type="repeat" description="ANK 9">
    <location>
        <begin position="284"/>
        <end position="313"/>
    </location>
</feature>
<feature type="repeat" description="ANK 10">
    <location>
        <begin position="317"/>
        <end position="346"/>
    </location>
</feature>
<feature type="domain" description="Death" evidence="1">
    <location>
        <begin position="379"/>
        <end position="467"/>
    </location>
</feature>
<feature type="non-terminal residue">
    <location>
        <position position="1"/>
    </location>
</feature>
<accession>Q9GKW8</accession>
<keyword id="KW-0040">ANK repeat</keyword>
<keyword id="KW-1185">Reference proteome</keyword>
<keyword id="KW-0677">Repeat</keyword>